<reference key="1">
    <citation type="journal article" date="1994" name="J. Bacteriol.">
        <title>Characterization of the pcp gene of Pseudomonas fluorescens and of its product, pyrrolidone carboxyl peptidase (Pcp).</title>
        <authorList>
            <person name="Gonzales T."/>
            <person name="Robert-Baudouy J."/>
        </authorList>
    </citation>
    <scope>NUCLEOTIDE SEQUENCE [GENOMIC DNA]</scope>
    <source>
        <strain>MFO</strain>
    </source>
</reference>
<comment type="function">
    <text>Removes 5-oxoproline from various penultimate amino acid residues except L-proline.</text>
</comment>
<comment type="catalytic activity">
    <reaction>
        <text>Release of an N-terminal pyroglutamyl group from a polypeptide, the second amino acid generally not being Pro.</text>
        <dbReference type="EC" id="3.4.19.3"/>
    </reaction>
</comment>
<comment type="subunit">
    <text>Homodimer.</text>
</comment>
<comment type="subcellular location">
    <subcellularLocation>
        <location>Cytoplasm</location>
    </subcellularLocation>
</comment>
<comment type="similarity">
    <text evidence="2">Belongs to the peptidase C15 family.</text>
</comment>
<gene>
    <name type="primary">pcp</name>
</gene>
<proteinExistence type="inferred from homology"/>
<name>PCP_PSEFL</name>
<keyword id="KW-0963">Cytoplasm</keyword>
<keyword id="KW-0378">Hydrolase</keyword>
<keyword id="KW-0645">Protease</keyword>
<keyword id="KW-0788">Thiol protease</keyword>
<evidence type="ECO:0000250" key="1"/>
<evidence type="ECO:0000305" key="2"/>
<organism>
    <name type="scientific">Pseudomonas fluorescens</name>
    <dbReference type="NCBI Taxonomy" id="294"/>
    <lineage>
        <taxon>Bacteria</taxon>
        <taxon>Pseudomonadati</taxon>
        <taxon>Pseudomonadota</taxon>
        <taxon>Gammaproteobacteria</taxon>
        <taxon>Pseudomonadales</taxon>
        <taxon>Pseudomonadaceae</taxon>
        <taxon>Pseudomonas</taxon>
    </lineage>
</organism>
<feature type="chain" id="PRO_0000184728" description="Pyrrolidone-carboxylate peptidase">
    <location>
        <begin position="1"/>
        <end position="213"/>
    </location>
</feature>
<feature type="active site" evidence="1">
    <location>
        <position position="81"/>
    </location>
</feature>
<feature type="active site" evidence="1">
    <location>
        <position position="144"/>
    </location>
</feature>
<feature type="active site" evidence="1">
    <location>
        <position position="166"/>
    </location>
</feature>
<accession>P42673</accession>
<protein>
    <recommendedName>
        <fullName>Pyrrolidone-carboxylate peptidase</fullName>
        <ecNumber>3.4.19.3</ecNumber>
    </recommendedName>
    <alternativeName>
        <fullName>5-oxoprolyl-peptidase</fullName>
    </alternativeName>
    <alternativeName>
        <fullName>Pyroglutamyl-peptidase I</fullName>
        <shortName>PGP-I</shortName>
        <shortName>Pyrase</shortName>
    </alternativeName>
</protein>
<sequence>MRIVLLTGFEPFDQDPVNPSWEAVRQLDGVQLGSDVKIVARRLPCAFATAGECLTRLIDELHPAMVIATGLGPGRSDISVERVAININDARIPDNLGEQPIDTAVVADGPAAFFTTLPIKAMVKAVREAGIAASVSQTAGTFVCNQVFYLLQHALAGSGVRSGFIHVPFLPEQVAGSQRPSMALDAMVAGLQAAVLTAWHTPVDVKEAGGQVS</sequence>
<dbReference type="EC" id="3.4.19.3"/>
<dbReference type="EMBL" id="X75919">
    <property type="protein sequence ID" value="CAA53519.1"/>
    <property type="molecule type" value="Genomic_DNA"/>
</dbReference>
<dbReference type="PIR" id="A55583">
    <property type="entry name" value="A55583"/>
</dbReference>
<dbReference type="SMR" id="P42673"/>
<dbReference type="MEROPS" id="C15.001"/>
<dbReference type="GO" id="GO:0005829">
    <property type="term" value="C:cytosol"/>
    <property type="evidence" value="ECO:0007669"/>
    <property type="project" value="InterPro"/>
</dbReference>
<dbReference type="GO" id="GO:0016920">
    <property type="term" value="F:pyroglutamyl-peptidase activity"/>
    <property type="evidence" value="ECO:0007669"/>
    <property type="project" value="UniProtKB-UniRule"/>
</dbReference>
<dbReference type="GO" id="GO:0006508">
    <property type="term" value="P:proteolysis"/>
    <property type="evidence" value="ECO:0007669"/>
    <property type="project" value="UniProtKB-KW"/>
</dbReference>
<dbReference type="CDD" id="cd00501">
    <property type="entry name" value="Peptidase_C15"/>
    <property type="match status" value="1"/>
</dbReference>
<dbReference type="FunFam" id="3.40.630.20:FF:000001">
    <property type="entry name" value="Pyrrolidone-carboxylate peptidase"/>
    <property type="match status" value="1"/>
</dbReference>
<dbReference type="Gene3D" id="3.40.630.20">
    <property type="entry name" value="Peptidase C15, pyroglutamyl peptidase I-like"/>
    <property type="match status" value="1"/>
</dbReference>
<dbReference type="HAMAP" id="MF_00417">
    <property type="entry name" value="Pyrrolid_peptidase"/>
    <property type="match status" value="1"/>
</dbReference>
<dbReference type="InterPro" id="IPR000816">
    <property type="entry name" value="Peptidase_C15"/>
</dbReference>
<dbReference type="InterPro" id="IPR016125">
    <property type="entry name" value="Peptidase_C15-like"/>
</dbReference>
<dbReference type="InterPro" id="IPR036440">
    <property type="entry name" value="Peptidase_C15-like_sf"/>
</dbReference>
<dbReference type="InterPro" id="IPR029762">
    <property type="entry name" value="PGP-I_bact-type"/>
</dbReference>
<dbReference type="InterPro" id="IPR033694">
    <property type="entry name" value="PGPEP1_Cys_AS"/>
</dbReference>
<dbReference type="InterPro" id="IPR033693">
    <property type="entry name" value="PGPEP1_Glu_AS"/>
</dbReference>
<dbReference type="NCBIfam" id="NF009676">
    <property type="entry name" value="PRK13197.1"/>
    <property type="match status" value="1"/>
</dbReference>
<dbReference type="NCBIfam" id="TIGR00504">
    <property type="entry name" value="pyro_pdase"/>
    <property type="match status" value="1"/>
</dbReference>
<dbReference type="PANTHER" id="PTHR23402">
    <property type="entry name" value="PROTEASE FAMILY C15 PYROGLUTAMYL-PEPTIDASE I-RELATED"/>
    <property type="match status" value="1"/>
</dbReference>
<dbReference type="PANTHER" id="PTHR23402:SF1">
    <property type="entry name" value="PYROGLUTAMYL-PEPTIDASE I"/>
    <property type="match status" value="1"/>
</dbReference>
<dbReference type="Pfam" id="PF01470">
    <property type="entry name" value="Peptidase_C15"/>
    <property type="match status" value="1"/>
</dbReference>
<dbReference type="PIRSF" id="PIRSF015592">
    <property type="entry name" value="Prld-crbxl_pptds"/>
    <property type="match status" value="1"/>
</dbReference>
<dbReference type="PRINTS" id="PR00706">
    <property type="entry name" value="PYROGLUPTASE"/>
</dbReference>
<dbReference type="SUPFAM" id="SSF53182">
    <property type="entry name" value="Pyrrolidone carboxyl peptidase (pyroglutamate aminopeptidase)"/>
    <property type="match status" value="1"/>
</dbReference>
<dbReference type="PROSITE" id="PS01334">
    <property type="entry name" value="PYRASE_CYS"/>
    <property type="match status" value="1"/>
</dbReference>
<dbReference type="PROSITE" id="PS01333">
    <property type="entry name" value="PYRASE_GLU"/>
    <property type="match status" value="1"/>
</dbReference>